<dbReference type="EMBL" id="BX640451">
    <property type="protein sequence ID" value="CAE35263.1"/>
    <property type="molecule type" value="Genomic_DNA"/>
</dbReference>
<dbReference type="RefSeq" id="WP_010927236.1">
    <property type="nucleotide sequence ID" value="NC_002927.3"/>
</dbReference>
<dbReference type="SMR" id="Q7WDT8"/>
<dbReference type="GeneID" id="56476601"/>
<dbReference type="KEGG" id="bbr:BB4899"/>
<dbReference type="eggNOG" id="COG3736">
    <property type="taxonomic scope" value="Bacteria"/>
</dbReference>
<dbReference type="HOGENOM" id="CLU_068461_1_1_4"/>
<dbReference type="Proteomes" id="UP000001027">
    <property type="component" value="Chromosome"/>
</dbReference>
<dbReference type="GO" id="GO:0005886">
    <property type="term" value="C:plasma membrane"/>
    <property type="evidence" value="ECO:0007669"/>
    <property type="project" value="UniProtKB-SubCell"/>
</dbReference>
<dbReference type="GO" id="GO:0030255">
    <property type="term" value="P:protein secretion by the type IV secretion system"/>
    <property type="evidence" value="ECO:0007669"/>
    <property type="project" value="InterPro"/>
</dbReference>
<dbReference type="CDD" id="cd16424">
    <property type="entry name" value="VirB8"/>
    <property type="match status" value="1"/>
</dbReference>
<dbReference type="Gene3D" id="3.10.450.230">
    <property type="entry name" value="VirB8 protein"/>
    <property type="match status" value="1"/>
</dbReference>
<dbReference type="InterPro" id="IPR032710">
    <property type="entry name" value="NTF2-like_dom_sf"/>
</dbReference>
<dbReference type="InterPro" id="IPR007430">
    <property type="entry name" value="VirB8"/>
</dbReference>
<dbReference type="InterPro" id="IPR026264">
    <property type="entry name" value="VirB8/PtlE"/>
</dbReference>
<dbReference type="Pfam" id="PF04335">
    <property type="entry name" value="VirB8"/>
    <property type="match status" value="1"/>
</dbReference>
<dbReference type="PIRSF" id="PIRSF003299">
    <property type="entry name" value="VirB8_PtlE"/>
    <property type="match status" value="1"/>
</dbReference>
<dbReference type="SUPFAM" id="SSF54427">
    <property type="entry name" value="NTF2-like"/>
    <property type="match status" value="1"/>
</dbReference>
<feature type="chain" id="PRO_0000287411" description="Type IV secretion system protein PtlE homolog">
    <location>
        <begin position="1"/>
        <end position="233"/>
    </location>
</feature>
<feature type="transmembrane region" description="Helical" evidence="1">
    <location>
        <begin position="42"/>
        <end position="62"/>
    </location>
</feature>
<proteinExistence type="inferred from homology"/>
<evidence type="ECO:0000255" key="1"/>
<evidence type="ECO:0000305" key="2"/>
<accession>Q7WDT8</accession>
<gene>
    <name type="primary">ptlE</name>
    <name type="ordered locus">BB4899</name>
</gene>
<organism>
    <name type="scientific">Bordetella bronchiseptica (strain ATCC BAA-588 / NCTC 13252 / RB50)</name>
    <name type="common">Alcaligenes bronchisepticus</name>
    <dbReference type="NCBI Taxonomy" id="257310"/>
    <lineage>
        <taxon>Bacteria</taxon>
        <taxon>Pseudomonadati</taxon>
        <taxon>Pseudomonadota</taxon>
        <taxon>Betaproteobacteria</taxon>
        <taxon>Burkholderiales</taxon>
        <taxon>Alcaligenaceae</taxon>
        <taxon>Bordetella</taxon>
    </lineage>
</organism>
<name>PTLE_BORBR</name>
<sequence length="233" mass="26022">MPDPRPLTPDQTHGRGHAEAAVDWEASRLYRLAQSERRAWTVAWAALAVTALSLIAIATMLPLKTTIPYLIEVEKSSGAASVVTQFEPRDFTPDTLMNQYWLTRYVAARERYDWHTIQHDYDYVRLLSAPAVRHDYETSYEAPDAPDRKYGAGTTLAVKILSAIDHGKGVGTVRFVRTRRDADGQGAAESSIWVATVAFAYDRPRALTQAQRWLNPLGFAVTSYRVDAEAGQP</sequence>
<reference key="1">
    <citation type="journal article" date="2003" name="Nat. Genet.">
        <title>Comparative analysis of the genome sequences of Bordetella pertussis, Bordetella parapertussis and Bordetella bronchiseptica.</title>
        <authorList>
            <person name="Parkhill J."/>
            <person name="Sebaihia M."/>
            <person name="Preston A."/>
            <person name="Murphy L.D."/>
            <person name="Thomson N.R."/>
            <person name="Harris D.E."/>
            <person name="Holden M.T.G."/>
            <person name="Churcher C.M."/>
            <person name="Bentley S.D."/>
            <person name="Mungall K.L."/>
            <person name="Cerdeno-Tarraga A.-M."/>
            <person name="Temple L."/>
            <person name="James K.D."/>
            <person name="Harris B."/>
            <person name="Quail M.A."/>
            <person name="Achtman M."/>
            <person name="Atkin R."/>
            <person name="Baker S."/>
            <person name="Basham D."/>
            <person name="Bason N."/>
            <person name="Cherevach I."/>
            <person name="Chillingworth T."/>
            <person name="Collins M."/>
            <person name="Cronin A."/>
            <person name="Davis P."/>
            <person name="Doggett J."/>
            <person name="Feltwell T."/>
            <person name="Goble A."/>
            <person name="Hamlin N."/>
            <person name="Hauser H."/>
            <person name="Holroyd S."/>
            <person name="Jagels K."/>
            <person name="Leather S."/>
            <person name="Moule S."/>
            <person name="Norberczak H."/>
            <person name="O'Neil S."/>
            <person name="Ormond D."/>
            <person name="Price C."/>
            <person name="Rabbinowitsch E."/>
            <person name="Rutter S."/>
            <person name="Sanders M."/>
            <person name="Saunders D."/>
            <person name="Seeger K."/>
            <person name="Sharp S."/>
            <person name="Simmonds M."/>
            <person name="Skelton J."/>
            <person name="Squares R."/>
            <person name="Squares S."/>
            <person name="Stevens K."/>
            <person name="Unwin L."/>
            <person name="Whitehead S."/>
            <person name="Barrell B.G."/>
            <person name="Maskell D.J."/>
        </authorList>
    </citation>
    <scope>NUCLEOTIDE SEQUENCE [LARGE SCALE GENOMIC DNA]</scope>
    <source>
        <strain>ATCC BAA-588 / NCTC 13252 / RB50</strain>
    </source>
</reference>
<reference key="2">
    <citation type="journal article" date="1987" name="J. Bacteriol.">
        <title>Bordetella parapertussis and Bordetella bronchiseptica contain transcriptionally silent pertussis toxin genes.</title>
        <authorList>
            <person name="Arico B."/>
            <person name="Rappuoli R."/>
        </authorList>
    </citation>
    <scope>TRANSCRIPTIONAL SILENCING</scope>
    <source>
        <strain>ATCC 4617 / NCIB 9935 / NCTC 8344 / NRRL B-140</strain>
    </source>
</reference>
<reference key="3">
    <citation type="journal article" date="1996" name="Infect. Immun.">
        <title>Analysis of proteins encoded by the ptx and ptl genes of Bordetella bronchiseptica and Bordetella parapertussis.</title>
        <authorList>
            <person name="Hausman S.Z."/>
            <person name="Cherry J.D."/>
            <person name="Heininger U."/>
            <person name="Wirsing von Koenig C.H."/>
            <person name="Burns D.L."/>
        </authorList>
    </citation>
    <scope>IN VITRO EXPRESSION FROM A B.PERTUSSIS PROMOTER</scope>
    <source>
        <strain>ATCC 31437 / Bb55</strain>
    </source>
</reference>
<protein>
    <recommendedName>
        <fullName>Type IV secretion system protein PtlE homolog</fullName>
    </recommendedName>
</protein>
<keyword id="KW-0997">Cell inner membrane</keyword>
<keyword id="KW-1003">Cell membrane</keyword>
<keyword id="KW-0472">Membrane</keyword>
<keyword id="KW-0812">Transmembrane</keyword>
<keyword id="KW-1133">Transmembrane helix</keyword>
<comment type="subcellular location">
    <subcellularLocation>
        <location evidence="2">Cell inner membrane</location>
        <topology evidence="2">Single-pass membrane protein</topology>
    </subcellularLocation>
</comment>
<comment type="miscellaneous">
    <text>B.bronchiseptica strain Bb55 harboring a functional ptx-ptl promoter from B.pertussis produces the PtlE protein in a stable form. Is also able to produce and secrete efficiently the pertussis toxin (PTX).</text>
</comment>
<comment type="similarity">
    <text evidence="2">Belongs to the virB8 family.</text>
</comment>
<comment type="caution">
    <text evidence="2">B.parapertussis and B.bronchiseptica seem not to produce the pertussis toxin (S1, S2, S4, S5 and S3) and ptl proteins (PtlA, PtlB, PtlC, PtlD, PtlE, PtlF, PtlG, PtlH and PtlI) in vivo due to changes in the promoter region of the ptx-ptl operon. However, it is possible that their promoter is active under certain, as-yet-undefined conditions and that B.parapertussis and B.bronchiseptica are therefore capable of producing these proteins.</text>
</comment>